<dbReference type="EMBL" id="AF011573">
    <property type="protein sequence ID" value="AAB84385.1"/>
    <property type="molecule type" value="mRNA"/>
</dbReference>
<dbReference type="EMBL" id="AY074878">
    <property type="protein sequence ID" value="AAL79677.1"/>
    <property type="molecule type" value="mRNA"/>
</dbReference>
<dbReference type="EMBL" id="AK314196">
    <property type="protein sequence ID" value="BAG36875.1"/>
    <property type="molecule type" value="mRNA"/>
</dbReference>
<dbReference type="EMBL" id="AC099669">
    <property type="status" value="NOT_ANNOTATED_CDS"/>
    <property type="molecule type" value="Genomic_DNA"/>
</dbReference>
<dbReference type="EMBL" id="CH471055">
    <property type="protein sequence ID" value="EAW64714.1"/>
    <property type="molecule type" value="Genomic_DNA"/>
</dbReference>
<dbReference type="RefSeq" id="NP_001020026.1">
    <molecule id="O14709-2"/>
    <property type="nucleotide sequence ID" value="NM_001024855.3"/>
</dbReference>
<dbReference type="RefSeq" id="NP_001310222.1">
    <molecule id="O14709-1"/>
    <property type="nucleotide sequence ID" value="NM_001323293.2"/>
</dbReference>
<dbReference type="RefSeq" id="NP_001310223.1">
    <molecule id="O14709-2"/>
    <property type="nucleotide sequence ID" value="NM_001323294.2"/>
</dbReference>
<dbReference type="RefSeq" id="NP_008922.1">
    <molecule id="O14709-1"/>
    <property type="nucleotide sequence ID" value="NM_006991.5"/>
</dbReference>
<dbReference type="SMR" id="O14709"/>
<dbReference type="BioGRID" id="115470">
    <property type="interactions" value="21"/>
</dbReference>
<dbReference type="FunCoup" id="O14709">
    <property type="interactions" value="176"/>
</dbReference>
<dbReference type="IntAct" id="O14709">
    <property type="interactions" value="20"/>
</dbReference>
<dbReference type="STRING" id="9606.ENSP00000345809"/>
<dbReference type="GlyGen" id="O14709">
    <property type="glycosylation" value="2 sites, 1 N-linked glycan (1 site), 1 O-linked glycan (1 site)"/>
</dbReference>
<dbReference type="iPTMnet" id="O14709"/>
<dbReference type="PhosphoSitePlus" id="O14709"/>
<dbReference type="BioMuta" id="ZNF197"/>
<dbReference type="jPOST" id="O14709"/>
<dbReference type="MassIVE" id="O14709"/>
<dbReference type="PaxDb" id="9606-ENSP00000379370"/>
<dbReference type="PeptideAtlas" id="O14709"/>
<dbReference type="ProteomicsDB" id="48170">
    <molecule id="O14709-1"/>
</dbReference>
<dbReference type="ProteomicsDB" id="48171">
    <molecule id="O14709-2"/>
</dbReference>
<dbReference type="Pumba" id="O14709"/>
<dbReference type="ABCD" id="O14709">
    <property type="antibodies" value="3 sequenced antibodies"/>
</dbReference>
<dbReference type="Antibodypedia" id="12503">
    <property type="antibodies" value="136 antibodies from 19 providers"/>
</dbReference>
<dbReference type="DNASU" id="10168"/>
<dbReference type="Ensembl" id="ENST00000344387.9">
    <molecule id="O14709-1"/>
    <property type="protein sequence ID" value="ENSP00000345809.4"/>
    <property type="gene ID" value="ENSG00000186448.15"/>
</dbReference>
<dbReference type="Ensembl" id="ENST00000383744.8">
    <molecule id="O14709-2"/>
    <property type="protein sequence ID" value="ENSP00000373250.4"/>
    <property type="gene ID" value="ENSG00000186448.15"/>
</dbReference>
<dbReference type="Ensembl" id="ENST00000383745.6">
    <molecule id="O14709-2"/>
    <property type="protein sequence ID" value="ENSP00000373251.2"/>
    <property type="gene ID" value="ENSG00000186448.15"/>
</dbReference>
<dbReference type="Ensembl" id="ENST00000396058.1">
    <molecule id="O14709-1"/>
    <property type="protein sequence ID" value="ENSP00000379370.1"/>
    <property type="gene ID" value="ENSG00000186448.15"/>
</dbReference>
<dbReference type="Ensembl" id="ENST00000627517.2">
    <molecule id="O14709-2"/>
    <property type="protein sequence ID" value="ENSP00000487305.1"/>
    <property type="gene ID" value="ENSG00000281709.3"/>
</dbReference>
<dbReference type="Ensembl" id="ENST00000627752.2">
    <molecule id="O14709-2"/>
    <property type="protein sequence ID" value="ENSP00000486777.1"/>
    <property type="gene ID" value="ENSG00000281709.3"/>
</dbReference>
<dbReference type="Ensembl" id="ENST00000627845.1">
    <molecule id="O14709-1"/>
    <property type="protein sequence ID" value="ENSP00000486739.1"/>
    <property type="gene ID" value="ENSG00000281709.3"/>
</dbReference>
<dbReference type="Ensembl" id="ENST00000628172.3">
    <molecule id="O14709-1"/>
    <property type="protein sequence ID" value="ENSP00000485709.1"/>
    <property type="gene ID" value="ENSG00000281709.3"/>
</dbReference>
<dbReference type="GeneID" id="10168"/>
<dbReference type="KEGG" id="hsa:10168"/>
<dbReference type="MANE-Select" id="ENST00000344387.9">
    <property type="protein sequence ID" value="ENSP00000345809.4"/>
    <property type="RefSeq nucleotide sequence ID" value="NM_006991.5"/>
    <property type="RefSeq protein sequence ID" value="NP_008922.1"/>
</dbReference>
<dbReference type="UCSC" id="uc003cnm.4">
    <molecule id="O14709-1"/>
    <property type="organism name" value="human"/>
</dbReference>
<dbReference type="AGR" id="HGNC:12988"/>
<dbReference type="CTD" id="10168"/>
<dbReference type="DisGeNET" id="10168"/>
<dbReference type="GeneCards" id="ZNF197"/>
<dbReference type="HGNC" id="HGNC:12988">
    <property type="gene designation" value="ZNF197"/>
</dbReference>
<dbReference type="HPA" id="ENSG00000186448">
    <property type="expression patterns" value="Low tissue specificity"/>
</dbReference>
<dbReference type="MIM" id="618359">
    <property type="type" value="gene"/>
</dbReference>
<dbReference type="neXtProt" id="NX_O14709"/>
<dbReference type="OpenTargets" id="ENSG00000186448"/>
<dbReference type="PharmGKB" id="PA37568"/>
<dbReference type="VEuPathDB" id="HostDB:ENSG00000186448"/>
<dbReference type="eggNOG" id="KOG1721">
    <property type="taxonomic scope" value="Eukaryota"/>
</dbReference>
<dbReference type="GeneTree" id="ENSGT00940000162801"/>
<dbReference type="HOGENOM" id="CLU_002678_53_2_1"/>
<dbReference type="InParanoid" id="O14709"/>
<dbReference type="OMA" id="TVEEFSW"/>
<dbReference type="OrthoDB" id="9411774at2759"/>
<dbReference type="PAN-GO" id="O14709">
    <property type="GO annotations" value="4 GO annotations based on evolutionary models"/>
</dbReference>
<dbReference type="PhylomeDB" id="O14709"/>
<dbReference type="TreeFam" id="TF350837"/>
<dbReference type="PathwayCommons" id="O14709"/>
<dbReference type="Reactome" id="R-HSA-212436">
    <property type="pathway name" value="Generic Transcription Pathway"/>
</dbReference>
<dbReference type="SignaLink" id="O14709"/>
<dbReference type="BioGRID-ORCS" id="10168">
    <property type="hits" value="10 hits in 1180 CRISPR screens"/>
</dbReference>
<dbReference type="GenomeRNAi" id="10168"/>
<dbReference type="Pharos" id="O14709">
    <property type="development level" value="Tdark"/>
</dbReference>
<dbReference type="PRO" id="PR:O14709"/>
<dbReference type="Proteomes" id="UP000005640">
    <property type="component" value="Chromosome 3"/>
</dbReference>
<dbReference type="RNAct" id="O14709">
    <property type="molecule type" value="protein"/>
</dbReference>
<dbReference type="Bgee" id="ENSG00000186448">
    <property type="expression patterns" value="Expressed in cortical plate and 107 other cell types or tissues"/>
</dbReference>
<dbReference type="ExpressionAtlas" id="O14709">
    <property type="expression patterns" value="baseline and differential"/>
</dbReference>
<dbReference type="GO" id="GO:0005634">
    <property type="term" value="C:nucleus"/>
    <property type="evidence" value="ECO:0000318"/>
    <property type="project" value="GO_Central"/>
</dbReference>
<dbReference type="GO" id="GO:0003677">
    <property type="term" value="F:DNA binding"/>
    <property type="evidence" value="ECO:0007669"/>
    <property type="project" value="UniProtKB-KW"/>
</dbReference>
<dbReference type="GO" id="GO:0008270">
    <property type="term" value="F:zinc ion binding"/>
    <property type="evidence" value="ECO:0007669"/>
    <property type="project" value="UniProtKB-KW"/>
</dbReference>
<dbReference type="GO" id="GO:0006357">
    <property type="term" value="P:regulation of transcription by RNA polymerase II"/>
    <property type="evidence" value="ECO:0000318"/>
    <property type="project" value="GO_Central"/>
</dbReference>
<dbReference type="CDD" id="cd07765">
    <property type="entry name" value="KRAB_A-box"/>
    <property type="match status" value="1"/>
</dbReference>
<dbReference type="CDD" id="cd07936">
    <property type="entry name" value="SCAN"/>
    <property type="match status" value="1"/>
</dbReference>
<dbReference type="FunFam" id="3.30.160.60:FF:004137">
    <property type="match status" value="1"/>
</dbReference>
<dbReference type="FunFam" id="3.30.160.60:FF:000295">
    <property type="entry name" value="zinc finger protein 19"/>
    <property type="match status" value="1"/>
</dbReference>
<dbReference type="FunFam" id="3.30.160.60:FF:000650">
    <property type="entry name" value="Zinc finger protein 197"/>
    <property type="match status" value="1"/>
</dbReference>
<dbReference type="FunFam" id="3.30.160.60:FF:002886">
    <property type="entry name" value="Zinc finger protein 197"/>
    <property type="match status" value="1"/>
</dbReference>
<dbReference type="FunFam" id="3.30.160.60:FF:001582">
    <property type="entry name" value="zinc finger protein 197"/>
    <property type="match status" value="1"/>
</dbReference>
<dbReference type="FunFam" id="3.30.160.60:FF:000250">
    <property type="entry name" value="zinc finger protein 197 isoform X1"/>
    <property type="match status" value="3"/>
</dbReference>
<dbReference type="FunFam" id="3.30.160.60:FF:000365">
    <property type="entry name" value="zinc finger protein 197 isoform X1"/>
    <property type="match status" value="4"/>
</dbReference>
<dbReference type="FunFam" id="3.30.160.60:FF:000512">
    <property type="entry name" value="zinc finger protein 197 isoform X1"/>
    <property type="match status" value="1"/>
</dbReference>
<dbReference type="FunFam" id="3.30.160.60:FF:000551">
    <property type="entry name" value="zinc finger protein 197 isoform X1"/>
    <property type="match status" value="1"/>
</dbReference>
<dbReference type="FunFam" id="3.30.160.60:FF:000688">
    <property type="entry name" value="zinc finger protein 197 isoform X1"/>
    <property type="match status" value="2"/>
</dbReference>
<dbReference type="FunFam" id="3.30.160.60:FF:000870">
    <property type="entry name" value="zinc finger protein 197 isoform X1"/>
    <property type="match status" value="1"/>
</dbReference>
<dbReference type="FunFam" id="3.30.160.60:FF:001118">
    <property type="entry name" value="zinc finger protein 197 isoform X1"/>
    <property type="match status" value="1"/>
</dbReference>
<dbReference type="FunFam" id="3.30.160.60:FF:001332">
    <property type="entry name" value="zinc finger protein 197 isoform X1"/>
    <property type="match status" value="1"/>
</dbReference>
<dbReference type="FunFam" id="3.30.160.60:FF:001351">
    <property type="entry name" value="zinc finger protein 197 isoform X1"/>
    <property type="match status" value="1"/>
</dbReference>
<dbReference type="FunFam" id="3.30.160.60:FF:000206">
    <property type="entry name" value="zinc finger protein 202 isoform X1"/>
    <property type="match status" value="1"/>
</dbReference>
<dbReference type="FunFam" id="1.10.4020.10:FF:000001">
    <property type="entry name" value="zinc finger protein 263 isoform X1"/>
    <property type="match status" value="1"/>
</dbReference>
<dbReference type="FunFam" id="3.30.160.60:FF:002402">
    <property type="entry name" value="Zinc finger protein 347"/>
    <property type="match status" value="1"/>
</dbReference>
<dbReference type="FunFam" id="3.30.160.60:FF:002090">
    <property type="entry name" value="Zinc finger protein 473"/>
    <property type="match status" value="1"/>
</dbReference>
<dbReference type="Gene3D" id="6.10.140.140">
    <property type="match status" value="1"/>
</dbReference>
<dbReference type="Gene3D" id="3.30.160.60">
    <property type="entry name" value="Classic Zinc Finger"/>
    <property type="match status" value="23"/>
</dbReference>
<dbReference type="Gene3D" id="1.10.4020.10">
    <property type="entry name" value="DNA breaking-rejoining enzymes"/>
    <property type="match status" value="1"/>
</dbReference>
<dbReference type="InterPro" id="IPR050752">
    <property type="entry name" value="C2H2-ZF_domain"/>
</dbReference>
<dbReference type="InterPro" id="IPR001909">
    <property type="entry name" value="KRAB"/>
</dbReference>
<dbReference type="InterPro" id="IPR036051">
    <property type="entry name" value="KRAB_dom_sf"/>
</dbReference>
<dbReference type="InterPro" id="IPR003309">
    <property type="entry name" value="SCAN_dom"/>
</dbReference>
<dbReference type="InterPro" id="IPR038269">
    <property type="entry name" value="SCAN_sf"/>
</dbReference>
<dbReference type="InterPro" id="IPR036236">
    <property type="entry name" value="Znf_C2H2_sf"/>
</dbReference>
<dbReference type="InterPro" id="IPR013087">
    <property type="entry name" value="Znf_C2H2_type"/>
</dbReference>
<dbReference type="PANTHER" id="PTHR24384">
    <property type="entry name" value="FINGER PUTATIVE TRANSCRIPTION FACTOR FAMILY-RELATED"/>
    <property type="match status" value="1"/>
</dbReference>
<dbReference type="PANTHER" id="PTHR24384:SF218">
    <property type="entry name" value="ZINC FINGER PROTEIN 502"/>
    <property type="match status" value="1"/>
</dbReference>
<dbReference type="Pfam" id="PF01352">
    <property type="entry name" value="KRAB"/>
    <property type="match status" value="1"/>
</dbReference>
<dbReference type="Pfam" id="PF02023">
    <property type="entry name" value="SCAN"/>
    <property type="match status" value="1"/>
</dbReference>
<dbReference type="Pfam" id="PF00096">
    <property type="entry name" value="zf-C2H2"/>
    <property type="match status" value="21"/>
</dbReference>
<dbReference type="SMART" id="SM00349">
    <property type="entry name" value="KRAB"/>
    <property type="match status" value="1"/>
</dbReference>
<dbReference type="SMART" id="SM00431">
    <property type="entry name" value="SCAN"/>
    <property type="match status" value="1"/>
</dbReference>
<dbReference type="SMART" id="SM00355">
    <property type="entry name" value="ZnF_C2H2"/>
    <property type="match status" value="22"/>
</dbReference>
<dbReference type="SUPFAM" id="SSF57667">
    <property type="entry name" value="beta-beta-alpha zinc fingers"/>
    <property type="match status" value="12"/>
</dbReference>
<dbReference type="SUPFAM" id="SSF109640">
    <property type="entry name" value="KRAB domain (Kruppel-associated box)"/>
    <property type="match status" value="1"/>
</dbReference>
<dbReference type="SUPFAM" id="SSF47353">
    <property type="entry name" value="Retrovirus capsid dimerization domain-like"/>
    <property type="match status" value="1"/>
</dbReference>
<dbReference type="PROSITE" id="PS50805">
    <property type="entry name" value="KRAB"/>
    <property type="match status" value="1"/>
</dbReference>
<dbReference type="PROSITE" id="PS50804">
    <property type="entry name" value="SCAN_BOX"/>
    <property type="match status" value="1"/>
</dbReference>
<dbReference type="PROSITE" id="PS00028">
    <property type="entry name" value="ZINC_FINGER_C2H2_1"/>
    <property type="match status" value="22"/>
</dbReference>
<dbReference type="PROSITE" id="PS50157">
    <property type="entry name" value="ZINC_FINGER_C2H2_2"/>
    <property type="match status" value="22"/>
</dbReference>
<comment type="function">
    <text>May be involved in transcriptional regulation.</text>
</comment>
<comment type="subcellular location">
    <subcellularLocation>
        <location evidence="6">Nucleus</location>
    </subcellularLocation>
</comment>
<comment type="alternative products">
    <event type="alternative splicing"/>
    <isoform>
        <id>O14709-1</id>
        <name>1</name>
        <sequence type="displayed"/>
    </isoform>
    <isoform>
        <id>O14709-2</id>
        <name>2</name>
        <name>VHLaK</name>
        <sequence type="described" ref="VSP_043021 VSP_043022"/>
    </isoform>
</comment>
<comment type="miscellaneous">
    <molecule>Isoform 2</molecule>
    <text evidence="6">Negative regulator of HIF1A transactivation.</text>
</comment>
<comment type="similarity">
    <text evidence="6">Belongs to the krueppel C2H2-type zinc-finger protein family.</text>
</comment>
<reference key="1">
    <citation type="journal article" date="1997" name="Nucleic Acids Res.">
        <title>Identification of rapid turnover transcripts overexpressed in thyroid tumors and thyroid cancer cell lines: use of a targeted differential RNA display method to select for mRNA subsets.</title>
        <authorList>
            <person name="Gonsky R."/>
            <person name="Knauf J.A."/>
            <person name="Elisei R."/>
            <person name="Wang J.W."/>
            <person name="Su S."/>
            <person name="Fagin J.A."/>
        </authorList>
    </citation>
    <scope>NUCLEOTIDE SEQUENCE [MRNA] (ISOFORM 1)</scope>
</reference>
<reference key="2">
    <citation type="journal article" date="2003" name="EMBO J.">
        <title>The VHL protein recruits a novel KRAB-A domain protein to repress HIF-1alpha transcriptional activity.</title>
        <authorList>
            <person name="Li Z."/>
            <person name="Wang D."/>
            <person name="Na X."/>
            <person name="Schoen S.R."/>
            <person name="Messing E.M."/>
            <person name="Wu G."/>
        </authorList>
    </citation>
    <scope>NUCLEOTIDE SEQUENCE [MRNA] (ISOFORM 2)</scope>
    <scope>ALTERNATIVE SPLICING</scope>
</reference>
<reference key="3">
    <citation type="journal article" date="2004" name="Nat. Genet.">
        <title>Complete sequencing and characterization of 21,243 full-length human cDNAs.</title>
        <authorList>
            <person name="Ota T."/>
            <person name="Suzuki Y."/>
            <person name="Nishikawa T."/>
            <person name="Otsuki T."/>
            <person name="Sugiyama T."/>
            <person name="Irie R."/>
            <person name="Wakamatsu A."/>
            <person name="Hayashi K."/>
            <person name="Sato H."/>
            <person name="Nagai K."/>
            <person name="Kimura K."/>
            <person name="Makita H."/>
            <person name="Sekine M."/>
            <person name="Obayashi M."/>
            <person name="Nishi T."/>
            <person name="Shibahara T."/>
            <person name="Tanaka T."/>
            <person name="Ishii S."/>
            <person name="Yamamoto J."/>
            <person name="Saito K."/>
            <person name="Kawai Y."/>
            <person name="Isono Y."/>
            <person name="Nakamura Y."/>
            <person name="Nagahari K."/>
            <person name="Murakami K."/>
            <person name="Yasuda T."/>
            <person name="Iwayanagi T."/>
            <person name="Wagatsuma M."/>
            <person name="Shiratori A."/>
            <person name="Sudo H."/>
            <person name="Hosoiri T."/>
            <person name="Kaku Y."/>
            <person name="Kodaira H."/>
            <person name="Kondo H."/>
            <person name="Sugawara M."/>
            <person name="Takahashi M."/>
            <person name="Kanda K."/>
            <person name="Yokoi T."/>
            <person name="Furuya T."/>
            <person name="Kikkawa E."/>
            <person name="Omura Y."/>
            <person name="Abe K."/>
            <person name="Kamihara K."/>
            <person name="Katsuta N."/>
            <person name="Sato K."/>
            <person name="Tanikawa M."/>
            <person name="Yamazaki M."/>
            <person name="Ninomiya K."/>
            <person name="Ishibashi T."/>
            <person name="Yamashita H."/>
            <person name="Murakawa K."/>
            <person name="Fujimori K."/>
            <person name="Tanai H."/>
            <person name="Kimata M."/>
            <person name="Watanabe M."/>
            <person name="Hiraoka S."/>
            <person name="Chiba Y."/>
            <person name="Ishida S."/>
            <person name="Ono Y."/>
            <person name="Takiguchi S."/>
            <person name="Watanabe S."/>
            <person name="Yosida M."/>
            <person name="Hotuta T."/>
            <person name="Kusano J."/>
            <person name="Kanehori K."/>
            <person name="Takahashi-Fujii A."/>
            <person name="Hara H."/>
            <person name="Tanase T.-O."/>
            <person name="Nomura Y."/>
            <person name="Togiya S."/>
            <person name="Komai F."/>
            <person name="Hara R."/>
            <person name="Takeuchi K."/>
            <person name="Arita M."/>
            <person name="Imose N."/>
            <person name="Musashino K."/>
            <person name="Yuuki H."/>
            <person name="Oshima A."/>
            <person name="Sasaki N."/>
            <person name="Aotsuka S."/>
            <person name="Yoshikawa Y."/>
            <person name="Matsunawa H."/>
            <person name="Ichihara T."/>
            <person name="Shiohata N."/>
            <person name="Sano S."/>
            <person name="Moriya S."/>
            <person name="Momiyama H."/>
            <person name="Satoh N."/>
            <person name="Takami S."/>
            <person name="Terashima Y."/>
            <person name="Suzuki O."/>
            <person name="Nakagawa S."/>
            <person name="Senoh A."/>
            <person name="Mizoguchi H."/>
            <person name="Goto Y."/>
            <person name="Shimizu F."/>
            <person name="Wakebe H."/>
            <person name="Hishigaki H."/>
            <person name="Watanabe T."/>
            <person name="Sugiyama A."/>
            <person name="Takemoto M."/>
            <person name="Kawakami B."/>
            <person name="Yamazaki M."/>
            <person name="Watanabe K."/>
            <person name="Kumagai A."/>
            <person name="Itakura S."/>
            <person name="Fukuzumi Y."/>
            <person name="Fujimori Y."/>
            <person name="Komiyama M."/>
            <person name="Tashiro H."/>
            <person name="Tanigami A."/>
            <person name="Fujiwara T."/>
            <person name="Ono T."/>
            <person name="Yamada K."/>
            <person name="Fujii Y."/>
            <person name="Ozaki K."/>
            <person name="Hirao M."/>
            <person name="Ohmori Y."/>
            <person name="Kawabata A."/>
            <person name="Hikiji T."/>
            <person name="Kobatake N."/>
            <person name="Inagaki H."/>
            <person name="Ikema Y."/>
            <person name="Okamoto S."/>
            <person name="Okitani R."/>
            <person name="Kawakami T."/>
            <person name="Noguchi S."/>
            <person name="Itoh T."/>
            <person name="Shigeta K."/>
            <person name="Senba T."/>
            <person name="Matsumura K."/>
            <person name="Nakajima Y."/>
            <person name="Mizuno T."/>
            <person name="Morinaga M."/>
            <person name="Sasaki M."/>
            <person name="Togashi T."/>
            <person name="Oyama M."/>
            <person name="Hata H."/>
            <person name="Watanabe M."/>
            <person name="Komatsu T."/>
            <person name="Mizushima-Sugano J."/>
            <person name="Satoh T."/>
            <person name="Shirai Y."/>
            <person name="Takahashi Y."/>
            <person name="Nakagawa K."/>
            <person name="Okumura K."/>
            <person name="Nagase T."/>
            <person name="Nomura N."/>
            <person name="Kikuchi H."/>
            <person name="Masuho Y."/>
            <person name="Yamashita R."/>
            <person name="Nakai K."/>
            <person name="Yada T."/>
            <person name="Nakamura Y."/>
            <person name="Ohara O."/>
            <person name="Isogai T."/>
            <person name="Sugano S."/>
        </authorList>
    </citation>
    <scope>NUCLEOTIDE SEQUENCE [LARGE SCALE MRNA] (ISOFORM 1)</scope>
    <source>
        <tissue>Tongue</tissue>
    </source>
</reference>
<reference key="4">
    <citation type="journal article" date="2006" name="Nature">
        <title>The DNA sequence, annotation and analysis of human chromosome 3.</title>
        <authorList>
            <person name="Muzny D.M."/>
            <person name="Scherer S.E."/>
            <person name="Kaul R."/>
            <person name="Wang J."/>
            <person name="Yu J."/>
            <person name="Sudbrak R."/>
            <person name="Buhay C.J."/>
            <person name="Chen R."/>
            <person name="Cree A."/>
            <person name="Ding Y."/>
            <person name="Dugan-Rocha S."/>
            <person name="Gill R."/>
            <person name="Gunaratne P."/>
            <person name="Harris R.A."/>
            <person name="Hawes A.C."/>
            <person name="Hernandez J."/>
            <person name="Hodgson A.V."/>
            <person name="Hume J."/>
            <person name="Jackson A."/>
            <person name="Khan Z.M."/>
            <person name="Kovar-Smith C."/>
            <person name="Lewis L.R."/>
            <person name="Lozado R.J."/>
            <person name="Metzker M.L."/>
            <person name="Milosavljevic A."/>
            <person name="Miner G.R."/>
            <person name="Morgan M.B."/>
            <person name="Nazareth L.V."/>
            <person name="Scott G."/>
            <person name="Sodergren E."/>
            <person name="Song X.-Z."/>
            <person name="Steffen D."/>
            <person name="Wei S."/>
            <person name="Wheeler D.A."/>
            <person name="Wright M.W."/>
            <person name="Worley K.C."/>
            <person name="Yuan Y."/>
            <person name="Zhang Z."/>
            <person name="Adams C.Q."/>
            <person name="Ansari-Lari M.A."/>
            <person name="Ayele M."/>
            <person name="Brown M.J."/>
            <person name="Chen G."/>
            <person name="Chen Z."/>
            <person name="Clendenning J."/>
            <person name="Clerc-Blankenburg K.P."/>
            <person name="Chen R."/>
            <person name="Chen Z."/>
            <person name="Davis C."/>
            <person name="Delgado O."/>
            <person name="Dinh H.H."/>
            <person name="Dong W."/>
            <person name="Draper H."/>
            <person name="Ernst S."/>
            <person name="Fu G."/>
            <person name="Gonzalez-Garay M.L."/>
            <person name="Garcia D.K."/>
            <person name="Gillett W."/>
            <person name="Gu J."/>
            <person name="Hao B."/>
            <person name="Haugen E."/>
            <person name="Havlak P."/>
            <person name="He X."/>
            <person name="Hennig S."/>
            <person name="Hu S."/>
            <person name="Huang W."/>
            <person name="Jackson L.R."/>
            <person name="Jacob L.S."/>
            <person name="Kelly S.H."/>
            <person name="Kube M."/>
            <person name="Levy R."/>
            <person name="Li Z."/>
            <person name="Liu B."/>
            <person name="Liu J."/>
            <person name="Liu W."/>
            <person name="Lu J."/>
            <person name="Maheshwari M."/>
            <person name="Nguyen B.-V."/>
            <person name="Okwuonu G.O."/>
            <person name="Palmeiri A."/>
            <person name="Pasternak S."/>
            <person name="Perez L.M."/>
            <person name="Phelps K.A."/>
            <person name="Plopper F.J."/>
            <person name="Qiang B."/>
            <person name="Raymond C."/>
            <person name="Rodriguez R."/>
            <person name="Saenphimmachak C."/>
            <person name="Santibanez J."/>
            <person name="Shen H."/>
            <person name="Shen Y."/>
            <person name="Subramanian S."/>
            <person name="Tabor P.E."/>
            <person name="Verduzco D."/>
            <person name="Waldron L."/>
            <person name="Wang J."/>
            <person name="Wang J."/>
            <person name="Wang Q."/>
            <person name="Williams G.A."/>
            <person name="Wong G.K.-S."/>
            <person name="Yao Z."/>
            <person name="Zhang J."/>
            <person name="Zhang X."/>
            <person name="Zhao G."/>
            <person name="Zhou J."/>
            <person name="Zhou Y."/>
            <person name="Nelson D."/>
            <person name="Lehrach H."/>
            <person name="Reinhardt R."/>
            <person name="Naylor S.L."/>
            <person name="Yang H."/>
            <person name="Olson M."/>
            <person name="Weinstock G."/>
            <person name="Gibbs R.A."/>
        </authorList>
    </citation>
    <scope>NUCLEOTIDE SEQUENCE [LARGE SCALE GENOMIC DNA]</scope>
</reference>
<reference key="5">
    <citation type="submission" date="2005-07" db="EMBL/GenBank/DDBJ databases">
        <authorList>
            <person name="Mural R.J."/>
            <person name="Istrail S."/>
            <person name="Sutton G.G."/>
            <person name="Florea L."/>
            <person name="Halpern A.L."/>
            <person name="Mobarry C.M."/>
            <person name="Lippert R."/>
            <person name="Walenz B."/>
            <person name="Shatkay H."/>
            <person name="Dew I."/>
            <person name="Miller J.R."/>
            <person name="Flanigan M.J."/>
            <person name="Edwards N.J."/>
            <person name="Bolanos R."/>
            <person name="Fasulo D."/>
            <person name="Halldorsson B.V."/>
            <person name="Hannenhalli S."/>
            <person name="Turner R."/>
            <person name="Yooseph S."/>
            <person name="Lu F."/>
            <person name="Nusskern D.R."/>
            <person name="Shue B.C."/>
            <person name="Zheng X.H."/>
            <person name="Zhong F."/>
            <person name="Delcher A.L."/>
            <person name="Huson D.H."/>
            <person name="Kravitz S.A."/>
            <person name="Mouchard L."/>
            <person name="Reinert K."/>
            <person name="Remington K.A."/>
            <person name="Clark A.G."/>
            <person name="Waterman M.S."/>
            <person name="Eichler E.E."/>
            <person name="Adams M.D."/>
            <person name="Hunkapiller M.W."/>
            <person name="Myers E.W."/>
            <person name="Venter J.C."/>
        </authorList>
    </citation>
    <scope>NUCLEOTIDE SEQUENCE [LARGE SCALE GENOMIC DNA]</scope>
</reference>
<evidence type="ECO:0000255" key="1">
    <source>
        <dbReference type="PROSITE-ProRule" id="PRU00042"/>
    </source>
</evidence>
<evidence type="ECO:0000255" key="2">
    <source>
        <dbReference type="PROSITE-ProRule" id="PRU00119"/>
    </source>
</evidence>
<evidence type="ECO:0000255" key="3">
    <source>
        <dbReference type="PROSITE-ProRule" id="PRU00187"/>
    </source>
</evidence>
<evidence type="ECO:0000256" key="4">
    <source>
        <dbReference type="SAM" id="MobiDB-lite"/>
    </source>
</evidence>
<evidence type="ECO:0000303" key="5">
    <source>
    </source>
</evidence>
<evidence type="ECO:0000305" key="6"/>
<organism>
    <name type="scientific">Homo sapiens</name>
    <name type="common">Human</name>
    <dbReference type="NCBI Taxonomy" id="9606"/>
    <lineage>
        <taxon>Eukaryota</taxon>
        <taxon>Metazoa</taxon>
        <taxon>Chordata</taxon>
        <taxon>Craniata</taxon>
        <taxon>Vertebrata</taxon>
        <taxon>Euteleostomi</taxon>
        <taxon>Mammalia</taxon>
        <taxon>Eutheria</taxon>
        <taxon>Euarchontoglires</taxon>
        <taxon>Primates</taxon>
        <taxon>Haplorrhini</taxon>
        <taxon>Catarrhini</taxon>
        <taxon>Hominidae</taxon>
        <taxon>Homo</taxon>
    </lineage>
</organism>
<feature type="chain" id="PRO_0000047448" description="Zinc finger protein 197">
    <location>
        <begin position="1"/>
        <end position="1029"/>
    </location>
</feature>
<feature type="domain" description="SCAN box" evidence="3">
    <location>
        <begin position="42"/>
        <end position="124"/>
    </location>
</feature>
<feature type="domain" description="KRAB" evidence="2">
    <location>
        <begin position="217"/>
        <end position="289"/>
    </location>
</feature>
<feature type="zinc finger region" description="C2H2-type 1" evidence="1">
    <location>
        <begin position="370"/>
        <end position="392"/>
    </location>
</feature>
<feature type="zinc finger region" description="C2H2-type 2" evidence="1">
    <location>
        <begin position="398"/>
        <end position="420"/>
    </location>
</feature>
<feature type="zinc finger region" description="C2H2-type 3" evidence="1">
    <location>
        <begin position="426"/>
        <end position="448"/>
    </location>
</feature>
<feature type="zinc finger region" description="C2H2-type 4" evidence="1">
    <location>
        <begin position="454"/>
        <end position="476"/>
    </location>
</feature>
<feature type="zinc finger region" description="C2H2-type 5" evidence="1">
    <location>
        <begin position="482"/>
        <end position="504"/>
    </location>
</feature>
<feature type="zinc finger region" description="C2H2-type 6" evidence="1">
    <location>
        <begin position="510"/>
        <end position="532"/>
    </location>
</feature>
<feature type="zinc finger region" description="C2H2-type 7" evidence="1">
    <location>
        <begin position="538"/>
        <end position="560"/>
    </location>
</feature>
<feature type="zinc finger region" description="C2H2-type 8" evidence="1">
    <location>
        <begin position="566"/>
        <end position="588"/>
    </location>
</feature>
<feature type="zinc finger region" description="C2H2-type 9" evidence="1">
    <location>
        <begin position="594"/>
        <end position="616"/>
    </location>
</feature>
<feature type="zinc finger region" description="C2H2-type 10" evidence="1">
    <location>
        <begin position="622"/>
        <end position="644"/>
    </location>
</feature>
<feature type="zinc finger region" description="C2H2-type 11" evidence="1">
    <location>
        <begin position="650"/>
        <end position="672"/>
    </location>
</feature>
<feature type="zinc finger region" description="C2H2-type 12" evidence="1">
    <location>
        <begin position="678"/>
        <end position="700"/>
    </location>
</feature>
<feature type="zinc finger region" description="C2H2-type 13" evidence="1">
    <location>
        <begin position="706"/>
        <end position="728"/>
    </location>
</feature>
<feature type="zinc finger region" description="C2H2-type 14" evidence="1">
    <location>
        <begin position="734"/>
        <end position="756"/>
    </location>
</feature>
<feature type="zinc finger region" description="C2H2-type 15" evidence="1">
    <location>
        <begin position="762"/>
        <end position="784"/>
    </location>
</feature>
<feature type="zinc finger region" description="C2H2-type 16" evidence="1">
    <location>
        <begin position="790"/>
        <end position="812"/>
    </location>
</feature>
<feature type="zinc finger region" description="C2H2-type 17" evidence="1">
    <location>
        <begin position="818"/>
        <end position="840"/>
    </location>
</feature>
<feature type="zinc finger region" description="C2H2-type 18" evidence="1">
    <location>
        <begin position="846"/>
        <end position="868"/>
    </location>
</feature>
<feature type="zinc finger region" description="C2H2-type 19" evidence="1">
    <location>
        <begin position="874"/>
        <end position="896"/>
    </location>
</feature>
<feature type="zinc finger region" description="C2H2-type 20" evidence="1">
    <location>
        <begin position="902"/>
        <end position="924"/>
    </location>
</feature>
<feature type="zinc finger region" description="C2H2-type 21" evidence="1">
    <location>
        <begin position="930"/>
        <end position="952"/>
    </location>
</feature>
<feature type="zinc finger region" description="C2H2-type 22" evidence="1">
    <location>
        <begin position="958"/>
        <end position="980"/>
    </location>
</feature>
<feature type="region of interest" description="Disordered" evidence="4">
    <location>
        <begin position="262"/>
        <end position="290"/>
    </location>
</feature>
<feature type="splice variant" id="VSP_043021" description="In isoform 2." evidence="5">
    <original>EWETMTENEEV</original>
    <variation>GYRKYRRQRNK</variation>
    <location>
        <begin position="257"/>
        <end position="267"/>
    </location>
</feature>
<feature type="splice variant" id="VSP_043022" description="In isoform 2." evidence="5">
    <location>
        <begin position="268"/>
        <end position="1029"/>
    </location>
</feature>
<gene>
    <name type="primary">ZNF197</name>
    <name type="synonym">ZKSCAN9</name>
    <name type="synonym">ZNF166</name>
</gene>
<protein>
    <recommendedName>
        <fullName>Zinc finger protein 197</fullName>
    </recommendedName>
    <alternativeName>
        <fullName>Zinc finger protein with KRAB and SCAN domains 9</fullName>
    </alternativeName>
    <alternativeName>
        <fullName>ZnF20</fullName>
    </alternativeName>
    <alternativeName>
        <fullName>pVHL-associated KRAB domain-containing protein</fullName>
    </alternativeName>
</protein>
<proteinExistence type="evidence at protein level"/>
<accession>O14709</accession>
<accession>B2RAH8</accession>
<accession>Q86VG0</accession>
<name>ZN197_HUMAN</name>
<keyword id="KW-0025">Alternative splicing</keyword>
<keyword id="KW-0238">DNA-binding</keyword>
<keyword id="KW-0479">Metal-binding</keyword>
<keyword id="KW-0539">Nucleus</keyword>
<keyword id="KW-1267">Proteomics identification</keyword>
<keyword id="KW-1185">Reference proteome</keyword>
<keyword id="KW-0677">Repeat</keyword>
<keyword id="KW-0804">Transcription</keyword>
<keyword id="KW-0805">Transcription regulation</keyword>
<keyword id="KW-0862">Zinc</keyword>
<keyword id="KW-0863">Zinc-finger</keyword>
<sequence length="1029" mass="118847">MTRENVAHNALRQEGLVKGKDDTWKWGTSFQGSSSSVWETSHLHFRQLRYHETSGPQEALSRLRELCRRWLRPEARTKAQILELLVLEQFLSILPGEIRTWVQLHHPGSGEEAVALVEELQKDLDGPAIQVPVLVKDQDTLQKVVSAPGTTLPPVLPGSHIAAEICPHPPTDLVAFNLQDPQHDSPAPEASALSQEENPRNQLMALMLLTAQPQELVMFEEVSVCFTSEEWACLGPIQRALYWDVMLENYGNVTSLEWETMTENEEVTSKPSSSQRADSHKGTSKRLQGSVPQVLDFEEECEWQVLASQWGNETDERADTVKKVSLCERDKKKRTPPEKQGQKWKELGDSLTFGSAISESLIGTEGKKFYKCDMCCKHFNKISHLINHRRIHTGEKPHKCKECGKGFIQRSSLLMHLRNHSGEKPYKCNECGKAFSQSAYLLNHQRIHTGEKPYKCKECGKGFYRHSGLIIHLRRHSGERPYKCNECGKVFSQNAYLIDHQRLHKGEEPYKCNKCQKAFILKKSLILHQRIHSGEKPYKCDECGKTFAQTTYLIDHQRLHSAENPYKCKECGKVFIRSKSLLLHQRVHTEKKTFGCKKCGKIFSSKSNFIDHKRMHSREKPYKCTECGKAFTQSAYLFDHQRLHNGEKPYECNECGKVFILKKSLILHQRFHTGENLYECKDCGKVFGSNRNLIDHERLHNGEKPYECRECGKTFIMSKSFMVHQKLHTQEKAYKCEDCGKAFSYNSSLLVHRRIHTGEKPFECSECGRAFSSNRNLIEHKRIHSGEKPYECDECGKCFILKKSLIGHQRIHTREKSYKCNDCGKVFSYRSNLIAHQRIHTGEKPYACSECGKGFTYNRNLIEHQRIHSGEKTYECHVCRKVLTSSRNLMVHQRIHTGEKPYKCNECGKDFSQNKNLVVHQRMHTGEKPYECDKCRKSFTSKRNLVGHQRIHTGEKPYGCNDCSKVFRQRKNLTVHQKIHTDEKPCECDVSEKEFSQTSNLHLQQKIHTIEEFSWLQNTNESKIEIQKI</sequence>